<proteinExistence type="inferred from homology"/>
<organism>
    <name type="scientific">Blochmanniella floridana</name>
    <dbReference type="NCBI Taxonomy" id="203907"/>
    <lineage>
        <taxon>Bacteria</taxon>
        <taxon>Pseudomonadati</taxon>
        <taxon>Pseudomonadota</taxon>
        <taxon>Gammaproteobacteria</taxon>
        <taxon>Enterobacterales</taxon>
        <taxon>Enterobacteriaceae</taxon>
        <taxon>ant endosymbionts</taxon>
        <taxon>Candidatus Blochmanniella</taxon>
    </lineage>
</organism>
<sequence>MTYKDLRNFIKTLEYQGELKKIDFPVDPNLEITEIAHRTLKSQGPALLFTNPIGHSIPILCNLFGTISRIELGIGIKNILSLRDIGKLLAFLKEPQIPTGFRDFLSKIPNFRQILNMPIKHVSNAVCQENIWNNAQDIDITQMPIMKSWPGDISIAITWGITITQGFTNKRQNLGIYRHQVLSKNKIIIRWLAHRGGALDFQEWYTHSSEKKFPIAIALGADPATLIGAAIPIPNTLSEYAFSGLLRGSKTAVTKCISSNLYVPAYSEIILEGYINRDDIAVEGPFGDHTGYYNSTEKFPVCTITHITHRNNPIYHSTYTGRPPDEPSILGMAMNELFIPIIQKQFPEIIDFYLPPEGCSYRLAIVTIKKQFLGHAKKIIFGVWSCLNQFMYTKFILVCDDDINARDWKDVIWAISTRMDPARDIIIAENTPIDYLDFSSPISGLGSKMGIDATNKWPGETQRTWGKPIQMNNSIQSRINDIWDQLHIPCNEKPFKHKN</sequence>
<accession>Q7VRJ3</accession>
<gene>
    <name evidence="1" type="primary">ubiD</name>
    <name type="ordered locus">Bfl620</name>
</gene>
<protein>
    <recommendedName>
        <fullName evidence="1">3-octaprenyl-4-hydroxybenzoate carboxy-lyase</fullName>
        <ecNumber evidence="1">4.1.1.98</ecNumber>
    </recommendedName>
    <alternativeName>
        <fullName evidence="1">Polyprenyl p-hydroxybenzoate decarboxylase</fullName>
    </alternativeName>
</protein>
<name>UBID_BLOFL</name>
<keyword id="KW-1003">Cell membrane</keyword>
<keyword id="KW-0210">Decarboxylase</keyword>
<keyword id="KW-0285">Flavoprotein</keyword>
<keyword id="KW-0288">FMN</keyword>
<keyword id="KW-0456">Lyase</keyword>
<keyword id="KW-0464">Manganese</keyword>
<keyword id="KW-0472">Membrane</keyword>
<keyword id="KW-0479">Metal-binding</keyword>
<keyword id="KW-1185">Reference proteome</keyword>
<keyword id="KW-0831">Ubiquinone biosynthesis</keyword>
<dbReference type="EC" id="4.1.1.98" evidence="1"/>
<dbReference type="EMBL" id="BX248583">
    <property type="protein sequence ID" value="CAD83295.1"/>
    <property type="molecule type" value="Genomic_DNA"/>
</dbReference>
<dbReference type="SMR" id="Q7VRJ3"/>
<dbReference type="STRING" id="203907.Bfl620"/>
<dbReference type="KEGG" id="bfl:Bfl620"/>
<dbReference type="eggNOG" id="COG0043">
    <property type="taxonomic scope" value="Bacteria"/>
</dbReference>
<dbReference type="HOGENOM" id="CLU_023348_4_1_6"/>
<dbReference type="OrthoDB" id="9809841at2"/>
<dbReference type="UniPathway" id="UPA00232"/>
<dbReference type="Proteomes" id="UP000002192">
    <property type="component" value="Chromosome"/>
</dbReference>
<dbReference type="GO" id="GO:0005829">
    <property type="term" value="C:cytosol"/>
    <property type="evidence" value="ECO:0007669"/>
    <property type="project" value="TreeGrafter"/>
</dbReference>
<dbReference type="GO" id="GO:0005886">
    <property type="term" value="C:plasma membrane"/>
    <property type="evidence" value="ECO:0007669"/>
    <property type="project" value="UniProtKB-SubCell"/>
</dbReference>
<dbReference type="GO" id="GO:0008694">
    <property type="term" value="F:3-octaprenyl-4-hydroxybenzoate carboxy-lyase activity"/>
    <property type="evidence" value="ECO:0007669"/>
    <property type="project" value="UniProtKB-UniRule"/>
</dbReference>
<dbReference type="GO" id="GO:0046872">
    <property type="term" value="F:metal ion binding"/>
    <property type="evidence" value="ECO:0007669"/>
    <property type="project" value="UniProtKB-KW"/>
</dbReference>
<dbReference type="GO" id="GO:0006744">
    <property type="term" value="P:ubiquinone biosynthetic process"/>
    <property type="evidence" value="ECO:0007669"/>
    <property type="project" value="UniProtKB-UniRule"/>
</dbReference>
<dbReference type="FunFam" id="3.40.1670.10:FF:000001">
    <property type="entry name" value="3-octaprenyl-4-hydroxybenzoate carboxy-lyase"/>
    <property type="match status" value="1"/>
</dbReference>
<dbReference type="Gene3D" id="1.20.5.570">
    <property type="entry name" value="Single helix bin"/>
    <property type="match status" value="1"/>
</dbReference>
<dbReference type="Gene3D" id="3.40.1670.10">
    <property type="entry name" value="UbiD C-terminal domain-like"/>
    <property type="match status" value="1"/>
</dbReference>
<dbReference type="HAMAP" id="MF_01636">
    <property type="entry name" value="UbiD"/>
    <property type="match status" value="1"/>
</dbReference>
<dbReference type="InterPro" id="IPR002830">
    <property type="entry name" value="UbiD"/>
</dbReference>
<dbReference type="InterPro" id="IPR049381">
    <property type="entry name" value="UbiD-like_C"/>
</dbReference>
<dbReference type="InterPro" id="IPR049383">
    <property type="entry name" value="UbiD-like_N"/>
</dbReference>
<dbReference type="InterPro" id="IPR023677">
    <property type="entry name" value="UbiD_bacteria"/>
</dbReference>
<dbReference type="InterPro" id="IPR048304">
    <property type="entry name" value="UbiD_Rift_dom"/>
</dbReference>
<dbReference type="NCBIfam" id="NF008175">
    <property type="entry name" value="PRK10922.1"/>
    <property type="match status" value="1"/>
</dbReference>
<dbReference type="NCBIfam" id="TIGR00148">
    <property type="entry name" value="UbiD family decarboxylase"/>
    <property type="match status" value="1"/>
</dbReference>
<dbReference type="PANTHER" id="PTHR30108">
    <property type="entry name" value="3-OCTAPRENYL-4-HYDROXYBENZOATE CARBOXY-LYASE-RELATED"/>
    <property type="match status" value="1"/>
</dbReference>
<dbReference type="PANTHER" id="PTHR30108:SF17">
    <property type="entry name" value="FERULIC ACID DECARBOXYLASE 1"/>
    <property type="match status" value="1"/>
</dbReference>
<dbReference type="Pfam" id="PF01977">
    <property type="entry name" value="UbiD"/>
    <property type="match status" value="1"/>
</dbReference>
<dbReference type="Pfam" id="PF20696">
    <property type="entry name" value="UbiD_C"/>
    <property type="match status" value="1"/>
</dbReference>
<dbReference type="Pfam" id="PF20695">
    <property type="entry name" value="UbiD_N"/>
    <property type="match status" value="1"/>
</dbReference>
<dbReference type="SUPFAM" id="SSF50475">
    <property type="entry name" value="FMN-binding split barrel"/>
    <property type="match status" value="1"/>
</dbReference>
<dbReference type="SUPFAM" id="SSF143968">
    <property type="entry name" value="UbiD C-terminal domain-like"/>
    <property type="match status" value="1"/>
</dbReference>
<evidence type="ECO:0000255" key="1">
    <source>
        <dbReference type="HAMAP-Rule" id="MF_01636"/>
    </source>
</evidence>
<reference key="1">
    <citation type="journal article" date="2003" name="Proc. Natl. Acad. Sci. U.S.A.">
        <title>The genome sequence of Blochmannia floridanus: comparative analysis of reduced genomes.</title>
        <authorList>
            <person name="Gil R."/>
            <person name="Silva F.J."/>
            <person name="Zientz E."/>
            <person name="Delmotte F."/>
            <person name="Gonzalez-Candelas F."/>
            <person name="Latorre A."/>
            <person name="Rausell C."/>
            <person name="Kamerbeek J."/>
            <person name="Gadau J."/>
            <person name="Hoelldobler B."/>
            <person name="van Ham R.C.H.J."/>
            <person name="Gross R."/>
            <person name="Moya A."/>
        </authorList>
    </citation>
    <scope>NUCLEOTIDE SEQUENCE [LARGE SCALE GENOMIC DNA]</scope>
</reference>
<comment type="function">
    <text evidence="1">Catalyzes the decarboxylation of 3-octaprenyl-4-hydroxy benzoate to 2-octaprenylphenol, an intermediate step in ubiquinone biosynthesis.</text>
</comment>
<comment type="catalytic activity">
    <reaction evidence="1">
        <text>a 4-hydroxy-3-(all-trans-polyprenyl)benzoate + H(+) = a 2-(all-trans-polyprenyl)phenol + CO2</text>
        <dbReference type="Rhea" id="RHEA:41680"/>
        <dbReference type="Rhea" id="RHEA-COMP:9514"/>
        <dbReference type="Rhea" id="RHEA-COMP:9516"/>
        <dbReference type="ChEBI" id="CHEBI:1269"/>
        <dbReference type="ChEBI" id="CHEBI:15378"/>
        <dbReference type="ChEBI" id="CHEBI:16526"/>
        <dbReference type="ChEBI" id="CHEBI:78396"/>
        <dbReference type="EC" id="4.1.1.98"/>
    </reaction>
</comment>
<comment type="cofactor">
    <cofactor evidence="1">
        <name>prenylated FMN</name>
        <dbReference type="ChEBI" id="CHEBI:87746"/>
    </cofactor>
    <text evidence="1">Binds 1 prenylated FMN per subunit.</text>
</comment>
<comment type="cofactor">
    <cofactor evidence="1">
        <name>Mn(2+)</name>
        <dbReference type="ChEBI" id="CHEBI:29035"/>
    </cofactor>
</comment>
<comment type="pathway">
    <text evidence="1">Cofactor biosynthesis; ubiquinone biosynthesis.</text>
</comment>
<comment type="subunit">
    <text evidence="1">Homohexamer.</text>
</comment>
<comment type="subcellular location">
    <subcellularLocation>
        <location evidence="1">Cell membrane</location>
        <topology evidence="1">Peripheral membrane protein</topology>
    </subcellularLocation>
</comment>
<comment type="similarity">
    <text evidence="1">Belongs to the UbiD family.</text>
</comment>
<feature type="chain" id="PRO_0000267647" description="3-octaprenyl-4-hydroxybenzoate carboxy-lyase">
    <location>
        <begin position="1"/>
        <end position="499"/>
    </location>
</feature>
<feature type="active site" description="Proton donor" evidence="1">
    <location>
        <position position="288"/>
    </location>
</feature>
<feature type="binding site" evidence="1">
    <location>
        <position position="173"/>
    </location>
    <ligand>
        <name>Mn(2+)</name>
        <dbReference type="ChEBI" id="CHEBI:29035"/>
    </ligand>
</feature>
<feature type="binding site" evidence="1">
    <location>
        <begin position="176"/>
        <end position="178"/>
    </location>
    <ligand>
        <name>prenylated FMN</name>
        <dbReference type="ChEBI" id="CHEBI:87746"/>
    </ligand>
</feature>
<feature type="binding site" evidence="1">
    <location>
        <begin position="190"/>
        <end position="192"/>
    </location>
    <ligand>
        <name>prenylated FMN</name>
        <dbReference type="ChEBI" id="CHEBI:87746"/>
    </ligand>
</feature>
<feature type="binding site" evidence="1">
    <location>
        <begin position="195"/>
        <end position="196"/>
    </location>
    <ligand>
        <name>prenylated FMN</name>
        <dbReference type="ChEBI" id="CHEBI:87746"/>
    </ligand>
</feature>
<feature type="binding site" evidence="1">
    <location>
        <position position="239"/>
    </location>
    <ligand>
        <name>Mn(2+)</name>
        <dbReference type="ChEBI" id="CHEBI:29035"/>
    </ligand>
</feature>